<protein>
    <recommendedName>
        <fullName evidence="1">Histidine--tRNA ligase</fullName>
        <ecNumber evidence="1">6.1.1.21</ecNumber>
    </recommendedName>
    <alternativeName>
        <fullName evidence="1">Histidyl-tRNA synthetase</fullName>
        <shortName evidence="1">HisRS</shortName>
    </alternativeName>
</protein>
<feature type="chain" id="PRO_0000136132" description="Histidine--tRNA ligase">
    <location>
        <begin position="1"/>
        <end position="408"/>
    </location>
</feature>
<sequence>MINALKGMKDLLDKDAYYYEKVIKICEEVAKNYGFTFINTPHLELCTLFKRSVGESSDIVGKEMYEFIDKGENHVCMRPEGTAGVVRAYIEKKLDKNTSVKRWFYYGSMFRYERPQKGRLREFHQFGVESLGIPNVYEDASIILMLVEIFSRLGIDFKLQLNSLGCSQCLPKYRDRLVEFLDSKEGFCEDCLRRKNLNPIRVLDCKNEHCQNLLENAPLLINNLCTSCQKDFETLQQILKDNGVKFELDSKLVRGLDYYSKTAFEFISDEIGAKAAIAGGGRYDRLIEYLGGKSGYGIGFAMGIERIITILEQKEEKIQREGIYLCAMDEIYIQKLLHIATNLRKEYKVLLSYEARKLAKHLENADKNNTEIFLCMGENEAQNESLFYKNLAKKEEKMIKISDLKKVL</sequence>
<proteinExistence type="inferred from homology"/>
<name>SYH_CAMJR</name>
<comment type="catalytic activity">
    <reaction evidence="1">
        <text>tRNA(His) + L-histidine + ATP = L-histidyl-tRNA(His) + AMP + diphosphate + H(+)</text>
        <dbReference type="Rhea" id="RHEA:17313"/>
        <dbReference type="Rhea" id="RHEA-COMP:9665"/>
        <dbReference type="Rhea" id="RHEA-COMP:9689"/>
        <dbReference type="ChEBI" id="CHEBI:15378"/>
        <dbReference type="ChEBI" id="CHEBI:30616"/>
        <dbReference type="ChEBI" id="CHEBI:33019"/>
        <dbReference type="ChEBI" id="CHEBI:57595"/>
        <dbReference type="ChEBI" id="CHEBI:78442"/>
        <dbReference type="ChEBI" id="CHEBI:78527"/>
        <dbReference type="ChEBI" id="CHEBI:456215"/>
        <dbReference type="EC" id="6.1.1.21"/>
    </reaction>
</comment>
<comment type="subunit">
    <text evidence="1">Homodimer.</text>
</comment>
<comment type="subcellular location">
    <subcellularLocation>
        <location evidence="1">Cytoplasm</location>
    </subcellularLocation>
</comment>
<comment type="similarity">
    <text evidence="1">Belongs to the class-II aminoacyl-tRNA synthetase family.</text>
</comment>
<organism>
    <name type="scientific">Campylobacter jejuni (strain RM1221)</name>
    <dbReference type="NCBI Taxonomy" id="195099"/>
    <lineage>
        <taxon>Bacteria</taxon>
        <taxon>Pseudomonadati</taxon>
        <taxon>Campylobacterota</taxon>
        <taxon>Epsilonproteobacteria</taxon>
        <taxon>Campylobacterales</taxon>
        <taxon>Campylobacteraceae</taxon>
        <taxon>Campylobacter</taxon>
    </lineage>
</organism>
<dbReference type="EC" id="6.1.1.21" evidence="1"/>
<dbReference type="EMBL" id="CP000025">
    <property type="protein sequence ID" value="AAW35193.1"/>
    <property type="molecule type" value="Genomic_DNA"/>
</dbReference>
<dbReference type="RefSeq" id="WP_002852541.1">
    <property type="nucleotide sequence ID" value="NC_003912.7"/>
</dbReference>
<dbReference type="SMR" id="Q5HV27"/>
<dbReference type="KEGG" id="cjr:CJE0856"/>
<dbReference type="HOGENOM" id="CLU_025113_1_1_7"/>
<dbReference type="GO" id="GO:0005737">
    <property type="term" value="C:cytoplasm"/>
    <property type="evidence" value="ECO:0007669"/>
    <property type="project" value="UniProtKB-SubCell"/>
</dbReference>
<dbReference type="GO" id="GO:0005524">
    <property type="term" value="F:ATP binding"/>
    <property type="evidence" value="ECO:0007669"/>
    <property type="project" value="UniProtKB-UniRule"/>
</dbReference>
<dbReference type="GO" id="GO:0004821">
    <property type="term" value="F:histidine-tRNA ligase activity"/>
    <property type="evidence" value="ECO:0007669"/>
    <property type="project" value="UniProtKB-UniRule"/>
</dbReference>
<dbReference type="GO" id="GO:0006427">
    <property type="term" value="P:histidyl-tRNA aminoacylation"/>
    <property type="evidence" value="ECO:0007669"/>
    <property type="project" value="UniProtKB-UniRule"/>
</dbReference>
<dbReference type="CDD" id="cd00773">
    <property type="entry name" value="HisRS-like_core"/>
    <property type="match status" value="1"/>
</dbReference>
<dbReference type="Gene3D" id="3.40.50.800">
    <property type="entry name" value="Anticodon-binding domain"/>
    <property type="match status" value="1"/>
</dbReference>
<dbReference type="Gene3D" id="3.30.930.10">
    <property type="entry name" value="Bira Bifunctional Protein, Domain 2"/>
    <property type="match status" value="1"/>
</dbReference>
<dbReference type="HAMAP" id="MF_00127">
    <property type="entry name" value="His_tRNA_synth"/>
    <property type="match status" value="1"/>
</dbReference>
<dbReference type="InterPro" id="IPR006195">
    <property type="entry name" value="aa-tRNA-synth_II"/>
</dbReference>
<dbReference type="InterPro" id="IPR045864">
    <property type="entry name" value="aa-tRNA-synth_II/BPL/LPL"/>
</dbReference>
<dbReference type="InterPro" id="IPR004154">
    <property type="entry name" value="Anticodon-bd"/>
</dbReference>
<dbReference type="InterPro" id="IPR036621">
    <property type="entry name" value="Anticodon-bd_dom_sf"/>
</dbReference>
<dbReference type="InterPro" id="IPR015807">
    <property type="entry name" value="His-tRNA-ligase"/>
</dbReference>
<dbReference type="InterPro" id="IPR041715">
    <property type="entry name" value="HisRS-like_core"/>
</dbReference>
<dbReference type="InterPro" id="IPR004516">
    <property type="entry name" value="HisRS/HisZ"/>
</dbReference>
<dbReference type="NCBIfam" id="TIGR00442">
    <property type="entry name" value="hisS"/>
    <property type="match status" value="1"/>
</dbReference>
<dbReference type="PANTHER" id="PTHR43707:SF1">
    <property type="entry name" value="HISTIDINE--TRNA LIGASE, MITOCHONDRIAL-RELATED"/>
    <property type="match status" value="1"/>
</dbReference>
<dbReference type="PANTHER" id="PTHR43707">
    <property type="entry name" value="HISTIDYL-TRNA SYNTHETASE"/>
    <property type="match status" value="1"/>
</dbReference>
<dbReference type="Pfam" id="PF03129">
    <property type="entry name" value="HGTP_anticodon"/>
    <property type="match status" value="1"/>
</dbReference>
<dbReference type="Pfam" id="PF13393">
    <property type="entry name" value="tRNA-synt_His"/>
    <property type="match status" value="1"/>
</dbReference>
<dbReference type="PIRSF" id="PIRSF001549">
    <property type="entry name" value="His-tRNA_synth"/>
    <property type="match status" value="1"/>
</dbReference>
<dbReference type="SUPFAM" id="SSF52954">
    <property type="entry name" value="Class II aaRS ABD-related"/>
    <property type="match status" value="1"/>
</dbReference>
<dbReference type="SUPFAM" id="SSF55681">
    <property type="entry name" value="Class II aaRS and biotin synthetases"/>
    <property type="match status" value="1"/>
</dbReference>
<dbReference type="PROSITE" id="PS50862">
    <property type="entry name" value="AA_TRNA_LIGASE_II"/>
    <property type="match status" value="1"/>
</dbReference>
<gene>
    <name evidence="1" type="primary">hisS</name>
    <name type="ordered locus">CJE0856</name>
</gene>
<keyword id="KW-0030">Aminoacyl-tRNA synthetase</keyword>
<keyword id="KW-0067">ATP-binding</keyword>
<keyword id="KW-0963">Cytoplasm</keyword>
<keyword id="KW-0436">Ligase</keyword>
<keyword id="KW-0547">Nucleotide-binding</keyword>
<keyword id="KW-0648">Protein biosynthesis</keyword>
<accession>Q5HV27</accession>
<reference key="1">
    <citation type="journal article" date="2005" name="PLoS Biol.">
        <title>Major structural differences and novel potential virulence mechanisms from the genomes of multiple Campylobacter species.</title>
        <authorList>
            <person name="Fouts D.E."/>
            <person name="Mongodin E.F."/>
            <person name="Mandrell R.E."/>
            <person name="Miller W.G."/>
            <person name="Rasko D.A."/>
            <person name="Ravel J."/>
            <person name="Brinkac L.M."/>
            <person name="DeBoy R.T."/>
            <person name="Parker C.T."/>
            <person name="Daugherty S.C."/>
            <person name="Dodson R.J."/>
            <person name="Durkin A.S."/>
            <person name="Madupu R."/>
            <person name="Sullivan S.A."/>
            <person name="Shetty J.U."/>
            <person name="Ayodeji M.A."/>
            <person name="Shvartsbeyn A."/>
            <person name="Schatz M.C."/>
            <person name="Badger J.H."/>
            <person name="Fraser C.M."/>
            <person name="Nelson K.E."/>
        </authorList>
    </citation>
    <scope>NUCLEOTIDE SEQUENCE [LARGE SCALE GENOMIC DNA]</scope>
    <source>
        <strain>RM1221</strain>
    </source>
</reference>
<evidence type="ECO:0000255" key="1">
    <source>
        <dbReference type="HAMAP-Rule" id="MF_00127"/>
    </source>
</evidence>